<sequence length="1198" mass="135968">MPITQIISASDSEAGPKPSISLVPDKPSEPETSPRHHRLSRSLSKFKRWRGRSNSSLSMGSSEQQELQDSPNEARSDDDENGYNNDNADDLAKSKYMMKSIAGLLTTASVYAGMNNAQEMNVLSQVDSEESDSSDSFQENIGQNEVKSKKENLKTKSHPEVPRLDKRKPTLFDFSITREKLSKDNVAKLRQRFCLDEQEPFLNDFPAWLLKDVLVQGHIFITTKHFLFFAYLPKNPRSVKMSGNLNIRTKLIRSTRYWCVLKNHLFSMYTSSTELYFPVLTIDLREVQKIETQKHTLNGSATKTFKLYTDESTFKFNADSEFSAKSWVNALKKEQFAAQNSENNSISLKIPLPNIIEIDDQPIVNKALTLRLRALESSQTYAIDDFMFVFMDGSGSQVKESLGEQLAILQKSGVNTLYYDIPAKKSKSSFGKETPATAEQKNNGEDSKYLNVPTSAVPSSENGKKSRFRFRERSNSWFRRAKPLEDSQVEDVEEIYKDAANDIDSSVHSTIHIHEQEDSQEQTVAWKPSHLKNFAEMWAAKPIHYRNKFIPFQKDDTYLIKETEEVSANERFRYHFKFNKEKSLISTYYTYLNRNVPVYGKIYVSNDTVCFRSLLPGSNTYMVLPLVDVETCYKEKGFRFGYFVLVIVIHGHEELFFEFSTEVARDDIERILLKLLDNIYASSAEGSNISSASLGDVQHNPDSAKLKLFEDKINAEGFEVPLMIDENPHYKTSIKPNKSYKFGLLTIGSRGDVQPYIALGKGLIKEGHQVVIITHSEFRDFVESHGIQFEEIAGNPVELMSLMVENESMNVKMLREASSKFRGWIDALLQTSWEVCNRRKFDILIESPSAMVGIHIAEALQIPYFRAFTMPWTRTRAYPHAFIVPDQKRGGNYNYLTHVLFENVFWKGISGQVNKWRVETLGLGKTNLFLLQQNNVPFLYNVSPTIFPPSIDFSEWVRVTGYWFLDDKSTFKPPAELQEFISEARSKGKKLVYIGFGSIVVSNAKEMTEALVEAVMEADVYCILNKGWSERLGDKAAKKTEVDLPRNILNIGNVPHDWLFPQVDAAVHHGGSGTTGASLRAGLPTVIKPFFGDQFFYAGRVEDIGVGIALKKLNAQTLADALKVATTNKIMKDRAGLIKKKISKEDGIKTAISAIYNELEYARSVTLSRVKTPRKKEENVDATKLTPAETTDEGWTMI</sequence>
<name>ATG26_YEAS7</name>
<dbReference type="EC" id="2.4.1.-" evidence="1"/>
<dbReference type="EC" id="2.4.1.173" evidence="1"/>
<dbReference type="EMBL" id="AAFW02000169">
    <property type="protein sequence ID" value="EDN59412.1"/>
    <property type="molecule type" value="Genomic_DNA"/>
</dbReference>
<dbReference type="SMR" id="A7A179"/>
<dbReference type="HOGENOM" id="CLU_000537_6_0_1"/>
<dbReference type="OrthoDB" id="31283at4893"/>
<dbReference type="Proteomes" id="UP000007060">
    <property type="component" value="Unassembled WGS sequence"/>
</dbReference>
<dbReference type="GO" id="GO:0005737">
    <property type="term" value="C:cytoplasm"/>
    <property type="evidence" value="ECO:0007669"/>
    <property type="project" value="UniProtKB-SubCell"/>
</dbReference>
<dbReference type="GO" id="GO:0016020">
    <property type="term" value="C:membrane"/>
    <property type="evidence" value="ECO:0007669"/>
    <property type="project" value="UniProtKB-SubCell"/>
</dbReference>
<dbReference type="GO" id="GO:0016906">
    <property type="term" value="F:sterol 3-beta-glucosyltransferase activity"/>
    <property type="evidence" value="ECO:0007669"/>
    <property type="project" value="UniProtKB-EC"/>
</dbReference>
<dbReference type="GO" id="GO:0005975">
    <property type="term" value="P:carbohydrate metabolic process"/>
    <property type="evidence" value="ECO:0007669"/>
    <property type="project" value="InterPro"/>
</dbReference>
<dbReference type="GO" id="GO:0030259">
    <property type="term" value="P:lipid glycosylation"/>
    <property type="evidence" value="ECO:0007669"/>
    <property type="project" value="InterPro"/>
</dbReference>
<dbReference type="GO" id="GO:0016126">
    <property type="term" value="P:sterol biosynthetic process"/>
    <property type="evidence" value="ECO:0007669"/>
    <property type="project" value="UniProtKB-KW"/>
</dbReference>
<dbReference type="CDD" id="cd03784">
    <property type="entry name" value="GT1_Gtf-like"/>
    <property type="match status" value="1"/>
</dbReference>
<dbReference type="CDD" id="cd13215">
    <property type="entry name" value="PH-GRAM1_AGT26"/>
    <property type="match status" value="1"/>
</dbReference>
<dbReference type="CDD" id="cd13216">
    <property type="entry name" value="PH-GRAM2_AGT26"/>
    <property type="match status" value="1"/>
</dbReference>
<dbReference type="FunFam" id="2.30.29.30:FF:000303">
    <property type="entry name" value="Sterol 3-beta-glucosyltransferase"/>
    <property type="match status" value="1"/>
</dbReference>
<dbReference type="FunFam" id="2.30.29.30:FF:000391">
    <property type="entry name" value="Sterol 3-beta-glucosyltransferase"/>
    <property type="match status" value="1"/>
</dbReference>
<dbReference type="FunFam" id="3.40.50.2000:FF:000029">
    <property type="entry name" value="Sterol 3-beta-glucosyltransferase"/>
    <property type="match status" value="1"/>
</dbReference>
<dbReference type="FunFam" id="3.40.50.2000:FF:000009">
    <property type="entry name" value="Sterol 3-beta-glucosyltransferase UGT80A2"/>
    <property type="match status" value="1"/>
</dbReference>
<dbReference type="Gene3D" id="3.40.50.2000">
    <property type="entry name" value="Glycogen Phosphorylase B"/>
    <property type="match status" value="2"/>
</dbReference>
<dbReference type="Gene3D" id="2.30.29.30">
    <property type="entry name" value="Pleckstrin-homology domain (PH domain)/Phosphotyrosine-binding domain (PTB)"/>
    <property type="match status" value="2"/>
</dbReference>
<dbReference type="InterPro" id="IPR048066">
    <property type="entry name" value="ATG26_PH_GRAM1"/>
</dbReference>
<dbReference type="InterPro" id="IPR048065">
    <property type="entry name" value="ATG26_PH_GRAM2"/>
</dbReference>
<dbReference type="InterPro" id="IPR010610">
    <property type="entry name" value="EryCIII-like_C"/>
</dbReference>
<dbReference type="InterPro" id="IPR050426">
    <property type="entry name" value="Glycosyltransferase_28"/>
</dbReference>
<dbReference type="InterPro" id="IPR004276">
    <property type="entry name" value="GlycoTrans_28_N"/>
</dbReference>
<dbReference type="InterPro" id="IPR004182">
    <property type="entry name" value="GRAM"/>
</dbReference>
<dbReference type="InterPro" id="IPR011993">
    <property type="entry name" value="PH-like_dom_sf"/>
</dbReference>
<dbReference type="InterPro" id="IPR001849">
    <property type="entry name" value="PH_domain"/>
</dbReference>
<dbReference type="InterPro" id="IPR002213">
    <property type="entry name" value="UDP_glucos_trans"/>
</dbReference>
<dbReference type="PANTHER" id="PTHR48050">
    <property type="entry name" value="STEROL 3-BETA-GLUCOSYLTRANSFERASE"/>
    <property type="match status" value="1"/>
</dbReference>
<dbReference type="PANTHER" id="PTHR48050:SF25">
    <property type="entry name" value="STEROL 3-BETA-GLUCOSYLTRANSFERASE"/>
    <property type="match status" value="1"/>
</dbReference>
<dbReference type="Pfam" id="PF06722">
    <property type="entry name" value="EryCIII-like_C"/>
    <property type="match status" value="1"/>
</dbReference>
<dbReference type="Pfam" id="PF03033">
    <property type="entry name" value="Glyco_transf_28"/>
    <property type="match status" value="1"/>
</dbReference>
<dbReference type="Pfam" id="PF02893">
    <property type="entry name" value="GRAM"/>
    <property type="match status" value="1"/>
</dbReference>
<dbReference type="Pfam" id="PF00169">
    <property type="entry name" value="PH"/>
    <property type="match status" value="1"/>
</dbReference>
<dbReference type="SMART" id="SM00568">
    <property type="entry name" value="GRAM"/>
    <property type="match status" value="2"/>
</dbReference>
<dbReference type="SMART" id="SM00233">
    <property type="entry name" value="PH"/>
    <property type="match status" value="1"/>
</dbReference>
<dbReference type="SUPFAM" id="SSF50729">
    <property type="entry name" value="PH domain-like"/>
    <property type="match status" value="1"/>
</dbReference>
<dbReference type="SUPFAM" id="SSF53756">
    <property type="entry name" value="UDP-Glycosyltransferase/glycogen phosphorylase"/>
    <property type="match status" value="1"/>
</dbReference>
<dbReference type="PROSITE" id="PS50003">
    <property type="entry name" value="PH_DOMAIN"/>
    <property type="match status" value="1"/>
</dbReference>
<proteinExistence type="inferred from homology"/>
<protein>
    <recommendedName>
        <fullName evidence="5">Sterol 3-beta-glucosyltransferase</fullName>
        <ecNumber evidence="1">2.4.1.-</ecNumber>
        <ecNumber evidence="1">2.4.1.173</ecNumber>
    </recommendedName>
    <alternativeName>
        <fullName evidence="1">Autophagy-related protein 26</fullName>
    </alternativeName>
</protein>
<gene>
    <name evidence="1" type="primary">ATG26</name>
    <name type="ORF">SCY_3757</name>
</gene>
<organism>
    <name type="scientific">Saccharomyces cerevisiae (strain YJM789)</name>
    <name type="common">Baker's yeast</name>
    <dbReference type="NCBI Taxonomy" id="307796"/>
    <lineage>
        <taxon>Eukaryota</taxon>
        <taxon>Fungi</taxon>
        <taxon>Dikarya</taxon>
        <taxon>Ascomycota</taxon>
        <taxon>Saccharomycotina</taxon>
        <taxon>Saccharomycetes</taxon>
        <taxon>Saccharomycetales</taxon>
        <taxon>Saccharomycetaceae</taxon>
        <taxon>Saccharomyces</taxon>
    </lineage>
</organism>
<comment type="function">
    <text evidence="1">Sterol glycosyltransferase responsible for the glycosylation of ergosterol to form ergosterol-glucoside (By similarity). Also shows activity in vitro on other sterols such as cholesterol, beta-sitosterol, stigmasterol and tomatidine (By similarity). In contrasts to what is observed in Pichia pastoris and Aspergillus oryzae, is not involved in cytoplasm to vacuole transport (Cvt), pexophagy or nonselective autophagy in Saccharomyces cerevisiae (By similarity).</text>
</comment>
<comment type="catalytic activity">
    <reaction evidence="1">
        <text>a sterol + UDP-alpha-D-glucose = a sterol 3-beta-D-glucoside + UDP + H(+)</text>
        <dbReference type="Rhea" id="RHEA:22724"/>
        <dbReference type="ChEBI" id="CHEBI:15378"/>
        <dbReference type="ChEBI" id="CHEBI:15889"/>
        <dbReference type="ChEBI" id="CHEBI:37424"/>
        <dbReference type="ChEBI" id="CHEBI:58223"/>
        <dbReference type="ChEBI" id="CHEBI:58885"/>
        <dbReference type="EC" id="2.4.1.173"/>
    </reaction>
    <physiologicalReaction direction="left-to-right" evidence="1">
        <dbReference type="Rhea" id="RHEA:22725"/>
    </physiologicalReaction>
</comment>
<comment type="catalytic activity">
    <reaction evidence="1">
        <text>ergosterol + UDP-alpha-D-glucose = ergosteryl 3-beta-D-glucoside + UDP + H(+)</text>
        <dbReference type="Rhea" id="RHEA:61836"/>
        <dbReference type="ChEBI" id="CHEBI:15378"/>
        <dbReference type="ChEBI" id="CHEBI:16933"/>
        <dbReference type="ChEBI" id="CHEBI:52973"/>
        <dbReference type="ChEBI" id="CHEBI:58223"/>
        <dbReference type="ChEBI" id="CHEBI:58885"/>
    </reaction>
    <physiologicalReaction direction="left-to-right" evidence="1">
        <dbReference type="Rhea" id="RHEA:61837"/>
    </physiologicalReaction>
</comment>
<comment type="subcellular location">
    <subcellularLocation>
        <location evidence="1">Cytoplasm</location>
    </subcellularLocation>
    <subcellularLocation>
        <location evidence="1">Membrane</location>
        <topology evidence="1">Peripheral membrane protein</topology>
    </subcellularLocation>
</comment>
<comment type="similarity">
    <text evidence="5">Belongs to the glycosyltransferase 28 family.</text>
</comment>
<accession>A7A179</accession>
<reference key="1">
    <citation type="journal article" date="2007" name="Proc. Natl. Acad. Sci. U.S.A.">
        <title>Genome sequencing and comparative analysis of Saccharomyces cerevisiae strain YJM789.</title>
        <authorList>
            <person name="Wei W."/>
            <person name="McCusker J.H."/>
            <person name="Hyman R.W."/>
            <person name="Jones T."/>
            <person name="Ning Y."/>
            <person name="Cao Z."/>
            <person name="Gu Z."/>
            <person name="Bruno D."/>
            <person name="Miranda M."/>
            <person name="Nguyen M."/>
            <person name="Wilhelmy J."/>
            <person name="Komp C."/>
            <person name="Tamse R."/>
            <person name="Wang X."/>
            <person name="Jia P."/>
            <person name="Luedi P."/>
            <person name="Oefner P.J."/>
            <person name="David L."/>
            <person name="Dietrich F.S."/>
            <person name="Li Y."/>
            <person name="Davis R.W."/>
            <person name="Steinmetz L.M."/>
        </authorList>
    </citation>
    <scope>NUCLEOTIDE SEQUENCE [LARGE SCALE GENOMIC DNA]</scope>
    <source>
        <strain>YJM789</strain>
    </source>
</reference>
<keyword id="KW-0963">Cytoplasm</keyword>
<keyword id="KW-0328">Glycosyltransferase</keyword>
<keyword id="KW-0444">Lipid biosynthesis</keyword>
<keyword id="KW-0443">Lipid metabolism</keyword>
<keyword id="KW-0472">Membrane</keyword>
<keyword id="KW-0597">Phosphoprotein</keyword>
<keyword id="KW-0677">Repeat</keyword>
<keyword id="KW-0752">Steroid biosynthesis</keyword>
<keyword id="KW-0753">Steroid metabolism</keyword>
<keyword id="KW-0756">Sterol biosynthesis</keyword>
<keyword id="KW-1207">Sterol metabolism</keyword>
<keyword id="KW-0808">Transferase</keyword>
<feature type="chain" id="PRO_0000318050" description="Sterol 3-beta-glucosyltransferase">
    <location>
        <begin position="1"/>
        <end position="1198"/>
    </location>
</feature>
<feature type="domain" description="GRAM 1" evidence="2">
    <location>
        <begin position="187"/>
        <end position="236"/>
    </location>
</feature>
<feature type="domain" description="PH" evidence="3">
    <location>
        <begin position="238"/>
        <end position="336"/>
    </location>
</feature>
<feature type="domain" description="GRAM 2" evidence="2">
    <location>
        <begin position="570"/>
        <end position="636"/>
    </location>
</feature>
<feature type="region of interest" description="Disordered" evidence="4">
    <location>
        <begin position="1"/>
        <end position="89"/>
    </location>
</feature>
<feature type="region of interest" description="Disordered" evidence="4">
    <location>
        <begin position="124"/>
        <end position="162"/>
    </location>
</feature>
<feature type="region of interest" description="Disordered" evidence="4">
    <location>
        <begin position="427"/>
        <end position="465"/>
    </location>
</feature>
<feature type="compositionally biased region" description="Polar residues" evidence="4">
    <location>
        <begin position="1"/>
        <end position="11"/>
    </location>
</feature>
<feature type="compositionally biased region" description="Basic residues" evidence="4">
    <location>
        <begin position="35"/>
        <end position="51"/>
    </location>
</feature>
<feature type="compositionally biased region" description="Low complexity" evidence="4">
    <location>
        <begin position="52"/>
        <end position="67"/>
    </location>
</feature>
<feature type="compositionally biased region" description="Basic and acidic residues" evidence="4">
    <location>
        <begin position="146"/>
        <end position="162"/>
    </location>
</feature>
<feature type="compositionally biased region" description="Polar residues" evidence="4">
    <location>
        <begin position="452"/>
        <end position="461"/>
    </location>
</feature>
<feature type="binding site" evidence="1">
    <location>
        <position position="749"/>
    </location>
    <ligand>
        <name>UDP-alpha-D-glucose</name>
        <dbReference type="ChEBI" id="CHEBI:58885"/>
    </ligand>
</feature>
<feature type="binding site" evidence="1">
    <location>
        <position position="750"/>
    </location>
    <ligand>
        <name>UDP-alpha-D-glucose</name>
        <dbReference type="ChEBI" id="CHEBI:58885"/>
    </ligand>
</feature>
<feature type="binding site" evidence="1">
    <location>
        <position position="752"/>
    </location>
    <ligand>
        <name>UDP-alpha-D-glucose</name>
        <dbReference type="ChEBI" id="CHEBI:58885"/>
    </ligand>
</feature>
<feature type="binding site" evidence="1">
    <location>
        <position position="1025"/>
    </location>
    <ligand>
        <name>UDP-alpha-D-glucose</name>
        <dbReference type="ChEBI" id="CHEBI:58885"/>
    </ligand>
</feature>
<feature type="binding site" evidence="1">
    <location>
        <position position="1053"/>
    </location>
    <ligand>
        <name>UDP-alpha-D-glucose</name>
        <dbReference type="ChEBI" id="CHEBI:58885"/>
    </ligand>
</feature>
<feature type="binding site" evidence="1">
    <location>
        <position position="1054"/>
    </location>
    <ligand>
        <name>UDP-alpha-D-glucose</name>
        <dbReference type="ChEBI" id="CHEBI:58885"/>
    </ligand>
</feature>
<feature type="binding site" evidence="1">
    <location>
        <position position="1056"/>
    </location>
    <ligand>
        <name>UDP-alpha-D-glucose</name>
        <dbReference type="ChEBI" id="CHEBI:58885"/>
    </ligand>
</feature>
<feature type="binding site" evidence="1">
    <location>
        <position position="1069"/>
    </location>
    <ligand>
        <name>UDP-alpha-D-glucose</name>
        <dbReference type="ChEBI" id="CHEBI:58885"/>
    </ligand>
</feature>
<feature type="binding site" evidence="1">
    <location>
        <position position="1072"/>
    </location>
    <ligand>
        <name>UDP-alpha-D-glucose</name>
        <dbReference type="ChEBI" id="CHEBI:58885"/>
    </ligand>
</feature>
<feature type="binding site" evidence="1">
    <location>
        <position position="1073"/>
    </location>
    <ligand>
        <name>UDP-alpha-D-glucose</name>
        <dbReference type="ChEBI" id="CHEBI:58885"/>
    </ligand>
</feature>
<feature type="binding site" evidence="1">
    <location>
        <position position="1074"/>
    </location>
    <ligand>
        <name>UDP-alpha-D-glucose</name>
        <dbReference type="ChEBI" id="CHEBI:58885"/>
    </ligand>
</feature>
<feature type="binding site" evidence="1">
    <location>
        <position position="1093"/>
    </location>
    <ligand>
        <name>UDP-alpha-D-glucose</name>
        <dbReference type="ChEBI" id="CHEBI:58885"/>
    </ligand>
</feature>
<feature type="binding site" evidence="1">
    <location>
        <position position="1094"/>
    </location>
    <ligand>
        <name>UDP-alpha-D-glucose</name>
        <dbReference type="ChEBI" id="CHEBI:58885"/>
    </ligand>
</feature>
<feature type="modified residue" description="Phosphoserine" evidence="1">
    <location>
        <position position="76"/>
    </location>
</feature>
<feature type="modified residue" description="Phosphoserine" evidence="1">
    <location>
        <position position="693"/>
    </location>
</feature>
<evidence type="ECO:0000250" key="1">
    <source>
        <dbReference type="UniProtKB" id="Q06321"/>
    </source>
</evidence>
<evidence type="ECO:0000255" key="2"/>
<evidence type="ECO:0000255" key="3">
    <source>
        <dbReference type="PROSITE-ProRule" id="PRU00145"/>
    </source>
</evidence>
<evidence type="ECO:0000256" key="4">
    <source>
        <dbReference type="SAM" id="MobiDB-lite"/>
    </source>
</evidence>
<evidence type="ECO:0000305" key="5"/>